<dbReference type="EMBL" id="X83276">
    <property type="protein sequence ID" value="CAA58251.1"/>
    <property type="molecule type" value="Genomic_DNA"/>
</dbReference>
<dbReference type="EMBL" id="Z74244">
    <property type="protein sequence ID" value="CAA98773.1"/>
    <property type="molecule type" value="Genomic_DNA"/>
</dbReference>
<dbReference type="PIR" id="S58781">
    <property type="entry name" value="S58781"/>
</dbReference>
<dbReference type="DIP" id="DIP-5163N"/>
<dbReference type="IntAct" id="Q12187">
    <property type="interactions" value="2"/>
</dbReference>
<dbReference type="STRING" id="4932.YDL196W"/>
<dbReference type="PaxDb" id="4932-YDL196W"/>
<dbReference type="EnsemblFungi" id="YDL196W_mRNA">
    <property type="protein sequence ID" value="YDL196W"/>
    <property type="gene ID" value="YDL196W"/>
</dbReference>
<dbReference type="AGR" id="SGD:S000002355"/>
<dbReference type="SGD" id="S000002355">
    <property type="gene designation" value="YDL196W"/>
</dbReference>
<dbReference type="HOGENOM" id="CLU_2186028_0_0_1"/>
<dbReference type="GO" id="GO:0016020">
    <property type="term" value="C:membrane"/>
    <property type="evidence" value="ECO:0007669"/>
    <property type="project" value="UniProtKB-SubCell"/>
</dbReference>
<proteinExistence type="uncertain"/>
<keyword id="KW-0472">Membrane</keyword>
<keyword id="KW-0812">Transmembrane</keyword>
<keyword id="KW-1133">Transmembrane helix</keyword>
<organism>
    <name type="scientific">Saccharomyces cerevisiae (strain ATCC 204508 / S288c)</name>
    <name type="common">Baker's yeast</name>
    <dbReference type="NCBI Taxonomy" id="559292"/>
    <lineage>
        <taxon>Eukaryota</taxon>
        <taxon>Fungi</taxon>
        <taxon>Dikarya</taxon>
        <taxon>Ascomycota</taxon>
        <taxon>Saccharomycotina</taxon>
        <taxon>Saccharomycetes</taxon>
        <taxon>Saccharomycetales</taxon>
        <taxon>Saccharomycetaceae</taxon>
        <taxon>Saccharomyces</taxon>
    </lineage>
</organism>
<gene>
    <name type="ordered locus">YDL196W</name>
    <name type="ORF">D1224</name>
</gene>
<protein>
    <recommendedName>
        <fullName>Putative uncharacterized protein YDL196W</fullName>
    </recommendedName>
</protein>
<sequence>MPSESRKRLSSKKGATVRLELVENYVICFFTVLCFCLIPHSSIDWRSGLSCYYFIDFFFFHLSPSIPFWFYPFSVKNHHTRSIRPRTKSEKNKQVVSDPFLYSCSRVAF</sequence>
<feature type="chain" id="PRO_0000299864" description="Putative uncharacterized protein YDL196W">
    <location>
        <begin position="1"/>
        <end position="109"/>
    </location>
</feature>
<feature type="transmembrane region" description="Helical" evidence="1">
    <location>
        <begin position="19"/>
        <end position="39"/>
    </location>
</feature>
<feature type="transmembrane region" description="Helical" evidence="1">
    <location>
        <begin position="53"/>
        <end position="73"/>
    </location>
</feature>
<reference key="1">
    <citation type="journal article" date="1995" name="Yeast">
        <title>New open reading frames, one of which is similar to the nifV gene of Azotobacter vinelandii, found on a 12.5 kbp fragment of chromosome IV of Saccharomyces cerevisiae.</title>
        <authorList>
            <person name="Verhasselt P."/>
            <person name="Voet M."/>
            <person name="Volckaert G."/>
        </authorList>
    </citation>
    <scope>NUCLEOTIDE SEQUENCE [GENOMIC DNA]</scope>
    <source>
        <strain>ATCC 96604 / S288c / FY1679</strain>
    </source>
</reference>
<reference key="2">
    <citation type="journal article" date="1997" name="Nature">
        <title>The nucleotide sequence of Saccharomyces cerevisiae chromosome IV.</title>
        <authorList>
            <person name="Jacq C."/>
            <person name="Alt-Moerbe J."/>
            <person name="Andre B."/>
            <person name="Arnold W."/>
            <person name="Bahr A."/>
            <person name="Ballesta J.P.G."/>
            <person name="Bargues M."/>
            <person name="Baron L."/>
            <person name="Becker A."/>
            <person name="Biteau N."/>
            <person name="Bloecker H."/>
            <person name="Blugeon C."/>
            <person name="Boskovic J."/>
            <person name="Brandt P."/>
            <person name="Brueckner M."/>
            <person name="Buitrago M.J."/>
            <person name="Coster F."/>
            <person name="Delaveau T."/>
            <person name="del Rey F."/>
            <person name="Dujon B."/>
            <person name="Eide L.G."/>
            <person name="Garcia-Cantalejo J.M."/>
            <person name="Goffeau A."/>
            <person name="Gomez-Peris A."/>
            <person name="Granotier C."/>
            <person name="Hanemann V."/>
            <person name="Hankeln T."/>
            <person name="Hoheisel J.D."/>
            <person name="Jaeger W."/>
            <person name="Jimenez A."/>
            <person name="Jonniaux J.-L."/>
            <person name="Kraemer C."/>
            <person name="Kuester H."/>
            <person name="Laamanen P."/>
            <person name="Legros Y."/>
            <person name="Louis E.J."/>
            <person name="Moeller-Rieker S."/>
            <person name="Monnet A."/>
            <person name="Moro M."/>
            <person name="Mueller-Auer S."/>
            <person name="Nussbaumer B."/>
            <person name="Paricio N."/>
            <person name="Paulin L."/>
            <person name="Perea J."/>
            <person name="Perez-Alonso M."/>
            <person name="Perez-Ortin J.E."/>
            <person name="Pohl T.M."/>
            <person name="Prydz H."/>
            <person name="Purnelle B."/>
            <person name="Rasmussen S.W."/>
            <person name="Remacha M.A."/>
            <person name="Revuelta J.L."/>
            <person name="Rieger M."/>
            <person name="Salom D."/>
            <person name="Saluz H.P."/>
            <person name="Saiz J.E."/>
            <person name="Saren A.-M."/>
            <person name="Schaefer M."/>
            <person name="Scharfe M."/>
            <person name="Schmidt E.R."/>
            <person name="Schneider C."/>
            <person name="Scholler P."/>
            <person name="Schwarz S."/>
            <person name="Soler-Mira A."/>
            <person name="Urrestarazu L.A."/>
            <person name="Verhasselt P."/>
            <person name="Vissers S."/>
            <person name="Voet M."/>
            <person name="Volckaert G."/>
            <person name="Wagner G."/>
            <person name="Wambutt R."/>
            <person name="Wedler E."/>
            <person name="Wedler H."/>
            <person name="Woelfl S."/>
            <person name="Harris D.E."/>
            <person name="Bowman S."/>
            <person name="Brown D."/>
            <person name="Churcher C.M."/>
            <person name="Connor R."/>
            <person name="Dedman K."/>
            <person name="Gentles S."/>
            <person name="Hamlin N."/>
            <person name="Hunt S."/>
            <person name="Jones L."/>
            <person name="McDonald S."/>
            <person name="Murphy L.D."/>
            <person name="Niblett D."/>
            <person name="Odell C."/>
            <person name="Oliver K."/>
            <person name="Rajandream M.A."/>
            <person name="Richards C."/>
            <person name="Shore L."/>
            <person name="Walsh S.V."/>
            <person name="Barrell B.G."/>
            <person name="Dietrich F.S."/>
            <person name="Mulligan J.T."/>
            <person name="Allen E."/>
            <person name="Araujo R."/>
            <person name="Aviles E."/>
            <person name="Berno A."/>
            <person name="Carpenter J."/>
            <person name="Chen E."/>
            <person name="Cherry J.M."/>
            <person name="Chung E."/>
            <person name="Duncan M."/>
            <person name="Hunicke-Smith S."/>
            <person name="Hyman R.W."/>
            <person name="Komp C."/>
            <person name="Lashkari D."/>
            <person name="Lew H."/>
            <person name="Lin D."/>
            <person name="Mosedale D."/>
            <person name="Nakahara K."/>
            <person name="Namath A."/>
            <person name="Oefner P."/>
            <person name="Oh C."/>
            <person name="Petel F.X."/>
            <person name="Roberts D."/>
            <person name="Schramm S."/>
            <person name="Schroeder M."/>
            <person name="Shogren T."/>
            <person name="Shroff N."/>
            <person name="Winant A."/>
            <person name="Yelton M.A."/>
            <person name="Botstein D."/>
            <person name="Davis R.W."/>
            <person name="Johnston M."/>
            <person name="Andrews S."/>
            <person name="Brinkman R."/>
            <person name="Cooper J."/>
            <person name="Ding H."/>
            <person name="Du Z."/>
            <person name="Favello A."/>
            <person name="Fulton L."/>
            <person name="Gattung S."/>
            <person name="Greco T."/>
            <person name="Hallsworth K."/>
            <person name="Hawkins J."/>
            <person name="Hillier L.W."/>
            <person name="Jier M."/>
            <person name="Johnson D."/>
            <person name="Johnston L."/>
            <person name="Kirsten J."/>
            <person name="Kucaba T."/>
            <person name="Langston Y."/>
            <person name="Latreille P."/>
            <person name="Le T."/>
            <person name="Mardis E."/>
            <person name="Menezes S."/>
            <person name="Miller N."/>
            <person name="Nhan M."/>
            <person name="Pauley A."/>
            <person name="Peluso D."/>
            <person name="Rifkin L."/>
            <person name="Riles L."/>
            <person name="Taich A."/>
            <person name="Trevaskis E."/>
            <person name="Vignati D."/>
            <person name="Wilcox L."/>
            <person name="Wohldman P."/>
            <person name="Vaudin M."/>
            <person name="Wilson R."/>
            <person name="Waterston R."/>
            <person name="Albermann K."/>
            <person name="Hani J."/>
            <person name="Heumann K."/>
            <person name="Kleine K."/>
            <person name="Mewes H.-W."/>
            <person name="Zollner A."/>
            <person name="Zaccaria P."/>
        </authorList>
    </citation>
    <scope>NUCLEOTIDE SEQUENCE [LARGE SCALE GENOMIC DNA]</scope>
    <source>
        <strain>ATCC 204508 / S288c</strain>
    </source>
</reference>
<reference key="3">
    <citation type="journal article" date="2014" name="G3 (Bethesda)">
        <title>The reference genome sequence of Saccharomyces cerevisiae: Then and now.</title>
        <authorList>
            <person name="Engel S.R."/>
            <person name="Dietrich F.S."/>
            <person name="Fisk D.G."/>
            <person name="Binkley G."/>
            <person name="Balakrishnan R."/>
            <person name="Costanzo M.C."/>
            <person name="Dwight S.S."/>
            <person name="Hitz B.C."/>
            <person name="Karra K."/>
            <person name="Nash R.S."/>
            <person name="Weng S."/>
            <person name="Wong E.D."/>
            <person name="Lloyd P."/>
            <person name="Skrzypek M.S."/>
            <person name="Miyasato S.R."/>
            <person name="Simison M."/>
            <person name="Cherry J.M."/>
        </authorList>
    </citation>
    <scope>GENOME REANNOTATION</scope>
    <source>
        <strain>ATCC 204508 / S288c</strain>
    </source>
</reference>
<evidence type="ECO:0000255" key="1"/>
<evidence type="ECO:0000305" key="2"/>
<evidence type="ECO:0000305" key="3">
    <source>
    </source>
</evidence>
<accession>Q12187</accession>
<name>YDL96_YEAST</name>
<comment type="subcellular location">
    <subcellularLocation>
        <location evidence="2">Membrane</location>
        <topology evidence="2">Multi-pass membrane protein</topology>
    </subcellularLocation>
</comment>
<comment type="miscellaneous">
    <text evidence="2">Located in promoter region of essential gene SEC31.</text>
</comment>
<comment type="caution">
    <text evidence="3">Product of a dubious gene prediction unlikely to encode a functional protein. Because of that it is not part of the S.cerevisiae S288c complete/reference proteome set.</text>
</comment>